<comment type="function">
    <text>On ligand binding, forms a receptor complex consisting of two type II and two type I transmembrane serine/threonine kinases. Type II receptors phosphorylate and activate type I receptors which autophosphorylate, then bind and activate SMAD transcriptional regulators. Receptor for anti-Muellerian hormone.</text>
</comment>
<comment type="catalytic activity">
    <reaction>
        <text>L-threonyl-[receptor-protein] + ATP = O-phospho-L-threonyl-[receptor-protein] + ADP + H(+)</text>
        <dbReference type="Rhea" id="RHEA:44880"/>
        <dbReference type="Rhea" id="RHEA-COMP:11024"/>
        <dbReference type="Rhea" id="RHEA-COMP:11025"/>
        <dbReference type="ChEBI" id="CHEBI:15378"/>
        <dbReference type="ChEBI" id="CHEBI:30013"/>
        <dbReference type="ChEBI" id="CHEBI:30616"/>
        <dbReference type="ChEBI" id="CHEBI:61977"/>
        <dbReference type="ChEBI" id="CHEBI:456216"/>
        <dbReference type="EC" id="2.7.11.30"/>
    </reaction>
</comment>
<comment type="catalytic activity">
    <reaction>
        <text>L-seryl-[receptor-protein] + ATP = O-phospho-L-seryl-[receptor-protein] + ADP + H(+)</text>
        <dbReference type="Rhea" id="RHEA:18673"/>
        <dbReference type="Rhea" id="RHEA-COMP:11022"/>
        <dbReference type="Rhea" id="RHEA-COMP:11023"/>
        <dbReference type="ChEBI" id="CHEBI:15378"/>
        <dbReference type="ChEBI" id="CHEBI:29999"/>
        <dbReference type="ChEBI" id="CHEBI:30616"/>
        <dbReference type="ChEBI" id="CHEBI:83421"/>
        <dbReference type="ChEBI" id="CHEBI:456216"/>
        <dbReference type="EC" id="2.7.11.30"/>
    </reaction>
</comment>
<comment type="cofactor">
    <cofactor evidence="1">
        <name>Mg(2+)</name>
        <dbReference type="ChEBI" id="CHEBI:18420"/>
    </cofactor>
    <cofactor evidence="1">
        <name>Mn(2+)</name>
        <dbReference type="ChEBI" id="CHEBI:29035"/>
    </cofactor>
</comment>
<comment type="subunit">
    <text evidence="3">Interacts with type I receptor ACVR1.</text>
</comment>
<comment type="subcellular location">
    <subcellularLocation>
        <location evidence="1">Membrane</location>
        <topology evidence="1">Single-pass type I membrane protein</topology>
    </subcellularLocation>
</comment>
<comment type="similarity">
    <text evidence="7">Belongs to the protein kinase superfamily. TKL Ser/Thr protein kinase family. TGFB receptor subfamily.</text>
</comment>
<proteinExistence type="evidence at transcript level"/>
<evidence type="ECO:0000250" key="1"/>
<evidence type="ECO:0000250" key="2">
    <source>
        <dbReference type="UniProtKB" id="P37023"/>
    </source>
</evidence>
<evidence type="ECO:0000250" key="3">
    <source>
        <dbReference type="UniProtKB" id="Q16671"/>
    </source>
</evidence>
<evidence type="ECO:0000255" key="4"/>
<evidence type="ECO:0000255" key="5">
    <source>
        <dbReference type="PROSITE-ProRule" id="PRU00159"/>
    </source>
</evidence>
<evidence type="ECO:0000256" key="6">
    <source>
        <dbReference type="SAM" id="MobiDB-lite"/>
    </source>
</evidence>
<evidence type="ECO:0000305" key="7"/>
<reference key="1">
    <citation type="journal article" date="1994" name="Mol. Endocrinol.">
        <title>Cloning, expression, and alternative splicing of the receptor for anti-Muellerian hormone.</title>
        <authorList>
            <person name="di Clemente N."/>
            <person name="Wilson C."/>
            <person name="Faure E."/>
            <person name="Boussin L."/>
            <person name="Carmillo P."/>
            <person name="Tizard R."/>
            <person name="Picard J.-Y."/>
            <person name="Vigier B."/>
            <person name="Josso N."/>
            <person name="Cate R."/>
        </authorList>
    </citation>
    <scope>NUCLEOTIDE SEQUENCE [MRNA]</scope>
    <source>
        <tissue>Ovary</tissue>
    </source>
</reference>
<dbReference type="EC" id="2.7.11.30"/>
<dbReference type="EMBL" id="U15025">
    <property type="protein sequence ID" value="AAA21875.1"/>
    <property type="molecule type" value="mRNA"/>
</dbReference>
<dbReference type="RefSeq" id="NP_001076263.1">
    <property type="nucleotide sequence ID" value="NM_001082794.1"/>
</dbReference>
<dbReference type="SMR" id="Q28616"/>
<dbReference type="FunCoup" id="Q28616">
    <property type="interactions" value="15"/>
</dbReference>
<dbReference type="STRING" id="9986.ENSOCUP00000041639"/>
<dbReference type="GlyCosmos" id="Q28616">
    <property type="glycosylation" value="2 sites, No reported glycans"/>
</dbReference>
<dbReference type="PaxDb" id="9986-ENSOCUP00000022385"/>
<dbReference type="GeneID" id="100009599"/>
<dbReference type="KEGG" id="ocu:100009599"/>
<dbReference type="CTD" id="269"/>
<dbReference type="eggNOG" id="KOG3653">
    <property type="taxonomic scope" value="Eukaryota"/>
</dbReference>
<dbReference type="InParanoid" id="Q28616"/>
<dbReference type="OrthoDB" id="669224at2759"/>
<dbReference type="Proteomes" id="UP000001811">
    <property type="component" value="Unplaced"/>
</dbReference>
<dbReference type="GO" id="GO:0005886">
    <property type="term" value="C:plasma membrane"/>
    <property type="evidence" value="ECO:0007669"/>
    <property type="project" value="TreeGrafter"/>
</dbReference>
<dbReference type="GO" id="GO:0043235">
    <property type="term" value="C:receptor complex"/>
    <property type="evidence" value="ECO:0007669"/>
    <property type="project" value="TreeGrafter"/>
</dbReference>
<dbReference type="GO" id="GO:0005524">
    <property type="term" value="F:ATP binding"/>
    <property type="evidence" value="ECO:0007669"/>
    <property type="project" value="UniProtKB-KW"/>
</dbReference>
<dbReference type="GO" id="GO:0046872">
    <property type="term" value="F:metal ion binding"/>
    <property type="evidence" value="ECO:0007669"/>
    <property type="project" value="UniProtKB-KW"/>
</dbReference>
<dbReference type="GO" id="GO:0005024">
    <property type="term" value="F:transforming growth factor beta receptor activity"/>
    <property type="evidence" value="ECO:0007669"/>
    <property type="project" value="TreeGrafter"/>
</dbReference>
<dbReference type="GO" id="GO:0030509">
    <property type="term" value="P:BMP signaling pathway"/>
    <property type="evidence" value="ECO:0007669"/>
    <property type="project" value="TreeGrafter"/>
</dbReference>
<dbReference type="CDD" id="cd23616">
    <property type="entry name" value="TFP_LU_ECD_AMHR2"/>
    <property type="match status" value="1"/>
</dbReference>
<dbReference type="FunFam" id="1.10.510.10:FF:000487">
    <property type="entry name" value="Anti-Muellerian hormone type-2 receptor"/>
    <property type="match status" value="1"/>
</dbReference>
<dbReference type="FunFam" id="3.30.200.20:FF:000349">
    <property type="entry name" value="Anti-Muellerian hormone type-2 receptor"/>
    <property type="match status" value="1"/>
</dbReference>
<dbReference type="Gene3D" id="2.10.60.10">
    <property type="entry name" value="CD59"/>
    <property type="match status" value="1"/>
</dbReference>
<dbReference type="Gene3D" id="3.30.200.20">
    <property type="entry name" value="Phosphorylase Kinase, domain 1"/>
    <property type="match status" value="1"/>
</dbReference>
<dbReference type="Gene3D" id="1.10.510.10">
    <property type="entry name" value="Transferase(Phosphotransferase) domain 1"/>
    <property type="match status" value="1"/>
</dbReference>
<dbReference type="InterPro" id="IPR015771">
    <property type="entry name" value="Anti-muellerian_hrmn_rcpt_II"/>
</dbReference>
<dbReference type="InterPro" id="IPR011009">
    <property type="entry name" value="Kinase-like_dom_sf"/>
</dbReference>
<dbReference type="InterPro" id="IPR000719">
    <property type="entry name" value="Prot_kinase_dom"/>
</dbReference>
<dbReference type="InterPro" id="IPR045860">
    <property type="entry name" value="Snake_toxin-like_sf"/>
</dbReference>
<dbReference type="InterPro" id="IPR000333">
    <property type="entry name" value="TGFB_receptor"/>
</dbReference>
<dbReference type="PANTHER" id="PTHR23255:SF49">
    <property type="entry name" value="ANTI-MUELLERIAN HORMONE TYPE-2 RECEPTOR"/>
    <property type="match status" value="1"/>
</dbReference>
<dbReference type="PANTHER" id="PTHR23255">
    <property type="entry name" value="TRANSFORMING GROWTH FACTOR-BETA RECEPTOR TYPE I AND II"/>
    <property type="match status" value="1"/>
</dbReference>
<dbReference type="Pfam" id="PF00069">
    <property type="entry name" value="Pkinase"/>
    <property type="match status" value="1"/>
</dbReference>
<dbReference type="PIRSF" id="PIRSF037392">
    <property type="entry name" value="AMHRII"/>
    <property type="match status" value="1"/>
</dbReference>
<dbReference type="SUPFAM" id="SSF56112">
    <property type="entry name" value="Protein kinase-like (PK-like)"/>
    <property type="match status" value="1"/>
</dbReference>
<dbReference type="SUPFAM" id="SSF57302">
    <property type="entry name" value="Snake toxin-like"/>
    <property type="match status" value="1"/>
</dbReference>
<dbReference type="PROSITE" id="PS50011">
    <property type="entry name" value="PROTEIN_KINASE_DOM"/>
    <property type="match status" value="1"/>
</dbReference>
<name>AMHR2_RABIT</name>
<accession>Q28616</accession>
<keyword id="KW-0067">ATP-binding</keyword>
<keyword id="KW-1015">Disulfide bond</keyword>
<keyword id="KW-0325">Glycoprotein</keyword>
<keyword id="KW-0418">Kinase</keyword>
<keyword id="KW-0460">Magnesium</keyword>
<keyword id="KW-0464">Manganese</keyword>
<keyword id="KW-0472">Membrane</keyword>
<keyword id="KW-0479">Metal-binding</keyword>
<keyword id="KW-0547">Nucleotide-binding</keyword>
<keyword id="KW-0675">Receptor</keyword>
<keyword id="KW-1185">Reference proteome</keyword>
<keyword id="KW-0723">Serine/threonine-protein kinase</keyword>
<keyword id="KW-0732">Signal</keyword>
<keyword id="KW-0808">Transferase</keyword>
<keyword id="KW-0812">Transmembrane</keyword>
<keyword id="KW-1133">Transmembrane helix</keyword>
<gene>
    <name type="primary">AMHR2</name>
</gene>
<feature type="signal peptide" evidence="4">
    <location>
        <begin position="1"/>
        <end position="17"/>
    </location>
</feature>
<feature type="chain" id="PRO_0000260266" description="Anti-Muellerian hormone type-2 receptor">
    <location>
        <begin position="18"/>
        <end position="569"/>
    </location>
</feature>
<feature type="topological domain" description="Extracellular" evidence="4">
    <location>
        <begin position="18"/>
        <end position="148"/>
    </location>
</feature>
<feature type="transmembrane region" description="Helical" evidence="4">
    <location>
        <begin position="149"/>
        <end position="169"/>
    </location>
</feature>
<feature type="topological domain" description="Cytoplasmic" evidence="4">
    <location>
        <begin position="170"/>
        <end position="569"/>
    </location>
</feature>
<feature type="domain" description="Protein kinase" evidence="5">
    <location>
        <begin position="201"/>
        <end position="511"/>
    </location>
</feature>
<feature type="region of interest" description="Disordered" evidence="6">
    <location>
        <begin position="512"/>
        <end position="535"/>
    </location>
</feature>
<feature type="active site" description="Proton acceptor" evidence="5">
    <location>
        <position position="331"/>
    </location>
</feature>
<feature type="binding site" evidence="5">
    <location>
        <begin position="207"/>
        <end position="215"/>
    </location>
    <ligand>
        <name>ATP</name>
        <dbReference type="ChEBI" id="CHEBI:30616"/>
    </ligand>
</feature>
<feature type="binding site" evidence="5">
    <location>
        <position position="228"/>
    </location>
    <ligand>
        <name>ATP</name>
        <dbReference type="ChEBI" id="CHEBI:30616"/>
    </ligand>
</feature>
<feature type="glycosylation site" description="N-linked (GlcNAc...) asparagine" evidence="4">
    <location>
        <position position="66"/>
    </location>
</feature>
<feature type="glycosylation site" description="N-linked (GlcNAc...) asparagine" evidence="4">
    <location>
        <position position="119"/>
    </location>
</feature>
<feature type="disulfide bond" evidence="2">
    <location>
        <begin position="55"/>
        <end position="79"/>
    </location>
</feature>
<feature type="disulfide bond" evidence="2">
    <location>
        <begin position="92"/>
        <end position="109"/>
    </location>
</feature>
<sequence length="569" mass="61099">MLGTLGLWALLPAAVQAPPNRRTCVFFEAPGVRGSTKTLGELLDAGPGPPRVIRCLYSRCCFGIWNLTRDQAQVEMQGCRDSDEPGCESLSCDPSPRARASSGSTLFTCSCGADFCNANYSHLPPLGGPGTPGPQGPQAAPGESPWMALALLGLVLLLLLLLGGIVVALLQRKAYRVQSGPEPEPDSGRDCSEELPELPQLCFSQVIREGGHAAVWAGQLQGELVAIKVFPRRAVAQFRAERALYELPGLQHNHVVRFIAAGQGGPGPLPSGPLLVLELHPKGSLCQYLSQHTSDWGSSLRMALSLAQGLAFLHEERWQDGQYKPGIAHRDLSSQNVLIREDGSCAIGDLGLALVLPGFAQPRAWAPPQPRGPAAIMEAGTQRYMAPELLDKSLDLQDWGTALRRADVYSLALLLWEILSRCPDLRPDGRPPPFQLAYEAELGSAPTTCELWALAVEERRRPDIPSSWCCFATDPGGLRELLEDCWDADPEARLTAECVQQRLVALVHPQEAQPCPEGRPHSHPEDWPPAPAPAPALLPGSPQPGACHFGVQQGLCSRNPGAACASSDV</sequence>
<protein>
    <recommendedName>
        <fullName>Anti-Muellerian hormone type-2 receptor</fullName>
        <ecNumber>2.7.11.30</ecNumber>
    </recommendedName>
    <alternativeName>
        <fullName>Anti-Muellerian hormone type II receptor</fullName>
        <shortName>AMH type II receptor</shortName>
    </alternativeName>
    <alternativeName>
        <fullName>MIS type II receptor</fullName>
        <shortName>MISRII</shortName>
        <shortName>MRII</shortName>
    </alternativeName>
</protein>
<organism>
    <name type="scientific">Oryctolagus cuniculus</name>
    <name type="common">Rabbit</name>
    <dbReference type="NCBI Taxonomy" id="9986"/>
    <lineage>
        <taxon>Eukaryota</taxon>
        <taxon>Metazoa</taxon>
        <taxon>Chordata</taxon>
        <taxon>Craniata</taxon>
        <taxon>Vertebrata</taxon>
        <taxon>Euteleostomi</taxon>
        <taxon>Mammalia</taxon>
        <taxon>Eutheria</taxon>
        <taxon>Euarchontoglires</taxon>
        <taxon>Glires</taxon>
        <taxon>Lagomorpha</taxon>
        <taxon>Leporidae</taxon>
        <taxon>Oryctolagus</taxon>
    </lineage>
</organism>